<comment type="function">
    <text evidence="1">The RecF protein is involved in DNA metabolism; it is required for DNA replication and normal SOS inducibility. RecF binds preferentially to single-stranded, linear DNA. It also seems to bind ATP.</text>
</comment>
<comment type="subcellular location">
    <subcellularLocation>
        <location evidence="1">Cytoplasm</location>
    </subcellularLocation>
</comment>
<comment type="similarity">
    <text evidence="1">Belongs to the RecF family.</text>
</comment>
<proteinExistence type="inferred from homology"/>
<evidence type="ECO:0000255" key="1">
    <source>
        <dbReference type="HAMAP-Rule" id="MF_00365"/>
    </source>
</evidence>
<sequence>MKLNTLQLENYRNYDEVTLKCHPDVNILIGENAQGKTNLLESIYTLALAKSHRTSNDKELIRFNADYAKIEGELSYRHGTMPLTMFITKKGKQVKVNHLEQSRLTQYIGHLNVVLFAPEDLNIVKGSPQIRRRFIDMELGQISAVYLNDLAQYQRILKQKNNYLKQLQLGQKKDLTMLEVLNQQFAEYAMKVTDKRAHFIQELESLAKPIHAGITNDKEALSLNYLPSLKFDYAQNEAARLEEIMSILSDNMQREKERGISLFGPHRDDISFDVNGMDAQTYGSQGQQRTTALSIKLAEIELMNIEVGEYPILLLDDVLSELDDSRQTHLLSTIQHKVQTFVTTTSVDGIDHEIMNNAKLYRINQGEIIK</sequence>
<organism>
    <name type="scientific">Staphylococcus aureus (strain Newman)</name>
    <dbReference type="NCBI Taxonomy" id="426430"/>
    <lineage>
        <taxon>Bacteria</taxon>
        <taxon>Bacillati</taxon>
        <taxon>Bacillota</taxon>
        <taxon>Bacilli</taxon>
        <taxon>Bacillales</taxon>
        <taxon>Staphylococcaceae</taxon>
        <taxon>Staphylococcus</taxon>
    </lineage>
</organism>
<keyword id="KW-0067">ATP-binding</keyword>
<keyword id="KW-0963">Cytoplasm</keyword>
<keyword id="KW-0227">DNA damage</keyword>
<keyword id="KW-0234">DNA repair</keyword>
<keyword id="KW-0235">DNA replication</keyword>
<keyword id="KW-0238">DNA-binding</keyword>
<keyword id="KW-0547">Nucleotide-binding</keyword>
<keyword id="KW-0742">SOS response</keyword>
<name>RECF_STAAE</name>
<feature type="chain" id="PRO_1000072100" description="DNA replication and repair protein RecF">
    <location>
        <begin position="1"/>
        <end position="370"/>
    </location>
</feature>
<feature type="binding site" evidence="1">
    <location>
        <begin position="30"/>
        <end position="37"/>
    </location>
    <ligand>
        <name>ATP</name>
        <dbReference type="ChEBI" id="CHEBI:30616"/>
    </ligand>
</feature>
<dbReference type="EMBL" id="AP009351">
    <property type="protein sequence ID" value="BAF66275.1"/>
    <property type="molecule type" value="Genomic_DNA"/>
</dbReference>
<dbReference type="RefSeq" id="WP_000775113.1">
    <property type="nucleotide sequence ID" value="NZ_JBBIAE010000007.1"/>
</dbReference>
<dbReference type="SMR" id="A6QD43"/>
<dbReference type="KEGG" id="sae:NWMN_0003"/>
<dbReference type="HOGENOM" id="CLU_040267_0_1_9"/>
<dbReference type="Proteomes" id="UP000006386">
    <property type="component" value="Chromosome"/>
</dbReference>
<dbReference type="GO" id="GO:0005737">
    <property type="term" value="C:cytoplasm"/>
    <property type="evidence" value="ECO:0007669"/>
    <property type="project" value="UniProtKB-SubCell"/>
</dbReference>
<dbReference type="GO" id="GO:0005524">
    <property type="term" value="F:ATP binding"/>
    <property type="evidence" value="ECO:0007669"/>
    <property type="project" value="UniProtKB-UniRule"/>
</dbReference>
<dbReference type="GO" id="GO:0003697">
    <property type="term" value="F:single-stranded DNA binding"/>
    <property type="evidence" value="ECO:0007669"/>
    <property type="project" value="UniProtKB-UniRule"/>
</dbReference>
<dbReference type="GO" id="GO:0006260">
    <property type="term" value="P:DNA replication"/>
    <property type="evidence" value="ECO:0007669"/>
    <property type="project" value="UniProtKB-UniRule"/>
</dbReference>
<dbReference type="GO" id="GO:0000731">
    <property type="term" value="P:DNA synthesis involved in DNA repair"/>
    <property type="evidence" value="ECO:0007669"/>
    <property type="project" value="TreeGrafter"/>
</dbReference>
<dbReference type="GO" id="GO:0006302">
    <property type="term" value="P:double-strand break repair"/>
    <property type="evidence" value="ECO:0007669"/>
    <property type="project" value="TreeGrafter"/>
</dbReference>
<dbReference type="GO" id="GO:0009432">
    <property type="term" value="P:SOS response"/>
    <property type="evidence" value="ECO:0007669"/>
    <property type="project" value="UniProtKB-UniRule"/>
</dbReference>
<dbReference type="CDD" id="cd03242">
    <property type="entry name" value="ABC_RecF"/>
    <property type="match status" value="1"/>
</dbReference>
<dbReference type="FunFam" id="1.20.1050.90:FF:000002">
    <property type="entry name" value="DNA replication and repair protein RecF"/>
    <property type="match status" value="1"/>
</dbReference>
<dbReference type="Gene3D" id="3.40.50.300">
    <property type="entry name" value="P-loop containing nucleotide triphosphate hydrolases"/>
    <property type="match status" value="1"/>
</dbReference>
<dbReference type="Gene3D" id="1.20.1050.90">
    <property type="entry name" value="RecF/RecN/SMC, N-terminal domain"/>
    <property type="match status" value="1"/>
</dbReference>
<dbReference type="HAMAP" id="MF_00365">
    <property type="entry name" value="RecF"/>
    <property type="match status" value="1"/>
</dbReference>
<dbReference type="InterPro" id="IPR001238">
    <property type="entry name" value="DNA-binding_RecF"/>
</dbReference>
<dbReference type="InterPro" id="IPR018078">
    <property type="entry name" value="DNA-binding_RecF_CS"/>
</dbReference>
<dbReference type="InterPro" id="IPR027417">
    <property type="entry name" value="P-loop_NTPase"/>
</dbReference>
<dbReference type="InterPro" id="IPR003395">
    <property type="entry name" value="RecF/RecN/SMC_N"/>
</dbReference>
<dbReference type="InterPro" id="IPR042174">
    <property type="entry name" value="RecF_2"/>
</dbReference>
<dbReference type="NCBIfam" id="TIGR00611">
    <property type="entry name" value="recf"/>
    <property type="match status" value="1"/>
</dbReference>
<dbReference type="PANTHER" id="PTHR32182">
    <property type="entry name" value="DNA REPLICATION AND REPAIR PROTEIN RECF"/>
    <property type="match status" value="1"/>
</dbReference>
<dbReference type="PANTHER" id="PTHR32182:SF0">
    <property type="entry name" value="DNA REPLICATION AND REPAIR PROTEIN RECF"/>
    <property type="match status" value="1"/>
</dbReference>
<dbReference type="Pfam" id="PF02463">
    <property type="entry name" value="SMC_N"/>
    <property type="match status" value="1"/>
</dbReference>
<dbReference type="SUPFAM" id="SSF52540">
    <property type="entry name" value="P-loop containing nucleoside triphosphate hydrolases"/>
    <property type="match status" value="1"/>
</dbReference>
<dbReference type="PROSITE" id="PS00617">
    <property type="entry name" value="RECF_1"/>
    <property type="match status" value="1"/>
</dbReference>
<dbReference type="PROSITE" id="PS00618">
    <property type="entry name" value="RECF_2"/>
    <property type="match status" value="1"/>
</dbReference>
<accession>A6QD43</accession>
<reference key="1">
    <citation type="journal article" date="2008" name="J. Bacteriol.">
        <title>Genome sequence of Staphylococcus aureus strain Newman and comparative analysis of staphylococcal genomes: polymorphism and evolution of two major pathogenicity islands.</title>
        <authorList>
            <person name="Baba T."/>
            <person name="Bae T."/>
            <person name="Schneewind O."/>
            <person name="Takeuchi F."/>
            <person name="Hiramatsu K."/>
        </authorList>
    </citation>
    <scope>NUCLEOTIDE SEQUENCE [LARGE SCALE GENOMIC DNA]</scope>
    <source>
        <strain>Newman</strain>
    </source>
</reference>
<protein>
    <recommendedName>
        <fullName evidence="1">DNA replication and repair protein RecF</fullName>
    </recommendedName>
</protein>
<gene>
    <name evidence="1" type="primary">recF</name>
    <name type="ordered locus">NWMN_0003</name>
</gene>